<reference key="1">
    <citation type="journal article" date="2004" name="Nat. Genet.">
        <title>Complete sequencing and characterization of 21,243 full-length human cDNAs.</title>
        <authorList>
            <person name="Ota T."/>
            <person name="Suzuki Y."/>
            <person name="Nishikawa T."/>
            <person name="Otsuki T."/>
            <person name="Sugiyama T."/>
            <person name="Irie R."/>
            <person name="Wakamatsu A."/>
            <person name="Hayashi K."/>
            <person name="Sato H."/>
            <person name="Nagai K."/>
            <person name="Kimura K."/>
            <person name="Makita H."/>
            <person name="Sekine M."/>
            <person name="Obayashi M."/>
            <person name="Nishi T."/>
            <person name="Shibahara T."/>
            <person name="Tanaka T."/>
            <person name="Ishii S."/>
            <person name="Yamamoto J."/>
            <person name="Saito K."/>
            <person name="Kawai Y."/>
            <person name="Isono Y."/>
            <person name="Nakamura Y."/>
            <person name="Nagahari K."/>
            <person name="Murakami K."/>
            <person name="Yasuda T."/>
            <person name="Iwayanagi T."/>
            <person name="Wagatsuma M."/>
            <person name="Shiratori A."/>
            <person name="Sudo H."/>
            <person name="Hosoiri T."/>
            <person name="Kaku Y."/>
            <person name="Kodaira H."/>
            <person name="Kondo H."/>
            <person name="Sugawara M."/>
            <person name="Takahashi M."/>
            <person name="Kanda K."/>
            <person name="Yokoi T."/>
            <person name="Furuya T."/>
            <person name="Kikkawa E."/>
            <person name="Omura Y."/>
            <person name="Abe K."/>
            <person name="Kamihara K."/>
            <person name="Katsuta N."/>
            <person name="Sato K."/>
            <person name="Tanikawa M."/>
            <person name="Yamazaki M."/>
            <person name="Ninomiya K."/>
            <person name="Ishibashi T."/>
            <person name="Yamashita H."/>
            <person name="Murakawa K."/>
            <person name="Fujimori K."/>
            <person name="Tanai H."/>
            <person name="Kimata M."/>
            <person name="Watanabe M."/>
            <person name="Hiraoka S."/>
            <person name="Chiba Y."/>
            <person name="Ishida S."/>
            <person name="Ono Y."/>
            <person name="Takiguchi S."/>
            <person name="Watanabe S."/>
            <person name="Yosida M."/>
            <person name="Hotuta T."/>
            <person name="Kusano J."/>
            <person name="Kanehori K."/>
            <person name="Takahashi-Fujii A."/>
            <person name="Hara H."/>
            <person name="Tanase T.-O."/>
            <person name="Nomura Y."/>
            <person name="Togiya S."/>
            <person name="Komai F."/>
            <person name="Hara R."/>
            <person name="Takeuchi K."/>
            <person name="Arita M."/>
            <person name="Imose N."/>
            <person name="Musashino K."/>
            <person name="Yuuki H."/>
            <person name="Oshima A."/>
            <person name="Sasaki N."/>
            <person name="Aotsuka S."/>
            <person name="Yoshikawa Y."/>
            <person name="Matsunawa H."/>
            <person name="Ichihara T."/>
            <person name="Shiohata N."/>
            <person name="Sano S."/>
            <person name="Moriya S."/>
            <person name="Momiyama H."/>
            <person name="Satoh N."/>
            <person name="Takami S."/>
            <person name="Terashima Y."/>
            <person name="Suzuki O."/>
            <person name="Nakagawa S."/>
            <person name="Senoh A."/>
            <person name="Mizoguchi H."/>
            <person name="Goto Y."/>
            <person name="Shimizu F."/>
            <person name="Wakebe H."/>
            <person name="Hishigaki H."/>
            <person name="Watanabe T."/>
            <person name="Sugiyama A."/>
            <person name="Takemoto M."/>
            <person name="Kawakami B."/>
            <person name="Yamazaki M."/>
            <person name="Watanabe K."/>
            <person name="Kumagai A."/>
            <person name="Itakura S."/>
            <person name="Fukuzumi Y."/>
            <person name="Fujimori Y."/>
            <person name="Komiyama M."/>
            <person name="Tashiro H."/>
            <person name="Tanigami A."/>
            <person name="Fujiwara T."/>
            <person name="Ono T."/>
            <person name="Yamada K."/>
            <person name="Fujii Y."/>
            <person name="Ozaki K."/>
            <person name="Hirao M."/>
            <person name="Ohmori Y."/>
            <person name="Kawabata A."/>
            <person name="Hikiji T."/>
            <person name="Kobatake N."/>
            <person name="Inagaki H."/>
            <person name="Ikema Y."/>
            <person name="Okamoto S."/>
            <person name="Okitani R."/>
            <person name="Kawakami T."/>
            <person name="Noguchi S."/>
            <person name="Itoh T."/>
            <person name="Shigeta K."/>
            <person name="Senba T."/>
            <person name="Matsumura K."/>
            <person name="Nakajima Y."/>
            <person name="Mizuno T."/>
            <person name="Morinaga M."/>
            <person name="Sasaki M."/>
            <person name="Togashi T."/>
            <person name="Oyama M."/>
            <person name="Hata H."/>
            <person name="Watanabe M."/>
            <person name="Komatsu T."/>
            <person name="Mizushima-Sugano J."/>
            <person name="Satoh T."/>
            <person name="Shirai Y."/>
            <person name="Takahashi Y."/>
            <person name="Nakagawa K."/>
            <person name="Okumura K."/>
            <person name="Nagase T."/>
            <person name="Nomura N."/>
            <person name="Kikuchi H."/>
            <person name="Masuho Y."/>
            <person name="Yamashita R."/>
            <person name="Nakai K."/>
            <person name="Yada T."/>
            <person name="Nakamura Y."/>
            <person name="Ohara O."/>
            <person name="Isogai T."/>
            <person name="Sugano S."/>
        </authorList>
    </citation>
    <scope>NUCLEOTIDE SEQUENCE [LARGE SCALE MRNA] (ISOFORMS 1 AND 2)</scope>
    <scope>VARIANT VAL-163</scope>
    <source>
        <tissue>Embryo</tissue>
        <tissue>Hepatoma</tissue>
        <tissue>Spleen</tissue>
    </source>
</reference>
<reference key="2">
    <citation type="journal article" date="2006" name="Nature">
        <title>Human chromosome 11 DNA sequence and analysis including novel gene identification.</title>
        <authorList>
            <person name="Taylor T.D."/>
            <person name="Noguchi H."/>
            <person name="Totoki Y."/>
            <person name="Toyoda A."/>
            <person name="Kuroki Y."/>
            <person name="Dewar K."/>
            <person name="Lloyd C."/>
            <person name="Itoh T."/>
            <person name="Takeda T."/>
            <person name="Kim D.-W."/>
            <person name="She X."/>
            <person name="Barlow K.F."/>
            <person name="Bloom T."/>
            <person name="Bruford E."/>
            <person name="Chang J.L."/>
            <person name="Cuomo C.A."/>
            <person name="Eichler E."/>
            <person name="FitzGerald M.G."/>
            <person name="Jaffe D.B."/>
            <person name="LaButti K."/>
            <person name="Nicol R."/>
            <person name="Park H.-S."/>
            <person name="Seaman C."/>
            <person name="Sougnez C."/>
            <person name="Yang X."/>
            <person name="Zimmer A.R."/>
            <person name="Zody M.C."/>
            <person name="Birren B.W."/>
            <person name="Nusbaum C."/>
            <person name="Fujiyama A."/>
            <person name="Hattori M."/>
            <person name="Rogers J."/>
            <person name="Lander E.S."/>
            <person name="Sakaki Y."/>
        </authorList>
    </citation>
    <scope>NUCLEOTIDE SEQUENCE [LARGE SCALE GENOMIC DNA]</scope>
</reference>
<reference key="3">
    <citation type="journal article" date="2004" name="Genome Res.">
        <title>The status, quality, and expansion of the NIH full-length cDNA project: the Mammalian Gene Collection (MGC).</title>
        <authorList>
            <consortium name="The MGC Project Team"/>
        </authorList>
    </citation>
    <scope>NUCLEOTIDE SEQUENCE [LARGE SCALE MRNA] (ISOFORMS 3 AND 4)</scope>
    <scope>NUCLEOTIDE SEQUENCE [LARGE SCALE MRNA] OF 940-1375 (ISOFORMS 1/2)</scope>
    <scope>VARIANT VAL-163</scope>
    <source>
        <tissue>Eye</tissue>
        <tissue>Testis</tissue>
    </source>
</reference>
<reference key="4">
    <citation type="submission" date="2002-01" db="EMBL/GenBank/DDBJ databases">
        <title>The nucleotide sequence of a long cDNA clone isolated from human spleen.</title>
        <authorList>
            <person name="Jikuya H."/>
            <person name="Takano J."/>
            <person name="Nomura N."/>
            <person name="Kikuno R."/>
            <person name="Nagase T."/>
            <person name="Ohara O."/>
        </authorList>
    </citation>
    <scope>NUCLEOTIDE SEQUENCE [LARGE SCALE MRNA] OF 604-1375 (ISOFORMS 1/2)</scope>
    <source>
        <tissue>Spleen</tissue>
    </source>
</reference>
<reference key="5">
    <citation type="journal article" date="2007" name="BMC Genomics">
        <title>The full-ORF clone resource of the German cDNA consortium.</title>
        <authorList>
            <person name="Bechtel S."/>
            <person name="Rosenfelder H."/>
            <person name="Duda A."/>
            <person name="Schmidt C.P."/>
            <person name="Ernst U."/>
            <person name="Wellenreuther R."/>
            <person name="Mehrle A."/>
            <person name="Schuster C."/>
            <person name="Bahr A."/>
            <person name="Bloecker H."/>
            <person name="Heubner D."/>
            <person name="Hoerlein A."/>
            <person name="Michel G."/>
            <person name="Wedler H."/>
            <person name="Koehrer K."/>
            <person name="Ottenwaelder B."/>
            <person name="Poustka A."/>
            <person name="Wiemann S."/>
            <person name="Schupp I."/>
        </authorList>
    </citation>
    <scope>NUCLEOTIDE SEQUENCE [LARGE SCALE MRNA] OF 630-1375 (ISOFORMS 1/2)</scope>
    <source>
        <tissue>Stomach</tissue>
    </source>
</reference>
<reference key="6">
    <citation type="journal article" date="2004" name="Biochem. Biophys. Res. Commun.">
        <title>Cloning and enzymatic analysis of 22 novel human ubiquitin-specific proteases.</title>
        <authorList>
            <person name="Quesada V."/>
            <person name="Diaz-Perales A."/>
            <person name="Gutierrez-Fernandez A."/>
            <person name="Garabaya C."/>
            <person name="Cal S."/>
            <person name="Lopez-Otin C."/>
        </authorList>
    </citation>
    <scope>TISSUE SPECIFICITY</scope>
</reference>
<reference key="7">
    <citation type="journal article" date="2006" name="Nat. Biotechnol.">
        <title>A probability-based approach for high-throughput protein phosphorylation analysis and site localization.</title>
        <authorList>
            <person name="Beausoleil S.A."/>
            <person name="Villen J."/>
            <person name="Gerber S.A."/>
            <person name="Rush J."/>
            <person name="Gygi S.P."/>
        </authorList>
    </citation>
    <scope>PHOSPHORYLATION [LARGE SCALE ANALYSIS] AT SER-832</scope>
    <scope>IDENTIFICATION BY MASS SPECTROMETRY [LARGE SCALE ANALYSIS]</scope>
    <source>
        <tissue>Cervix carcinoma</tissue>
    </source>
</reference>
<reference key="8">
    <citation type="journal article" date="2008" name="Proc. Natl. Acad. Sci. U.S.A.">
        <title>A quantitative atlas of mitotic phosphorylation.</title>
        <authorList>
            <person name="Dephoure N."/>
            <person name="Zhou C."/>
            <person name="Villen J."/>
            <person name="Beausoleil S.A."/>
            <person name="Bakalarski C.E."/>
            <person name="Elledge S.J."/>
            <person name="Gygi S.P."/>
        </authorList>
    </citation>
    <scope>PHOSPHORYLATION [LARGE SCALE ANALYSIS] AT SER-832 AND SER-910</scope>
    <scope>VARIANT [LARGE SCALE ANALYSIS] VAL-163</scope>
    <scope>IDENTIFICATION BY MASS SPECTROMETRY [LARGE SCALE ANALYSIS]</scope>
    <source>
        <tissue>Cervix carcinoma</tissue>
    </source>
</reference>
<reference key="9">
    <citation type="journal article" date="2009" name="Sci. Signal.">
        <title>Quantitative phosphoproteomic analysis of T cell receptor signaling reveals system-wide modulation of protein-protein interactions.</title>
        <authorList>
            <person name="Mayya V."/>
            <person name="Lundgren D.H."/>
            <person name="Hwang S.-I."/>
            <person name="Rezaul K."/>
            <person name="Wu L."/>
            <person name="Eng J.K."/>
            <person name="Rodionov V."/>
            <person name="Han D.K."/>
        </authorList>
    </citation>
    <scope>PHOSPHORYLATION [LARGE SCALE ANALYSIS] AT SER-910</scope>
    <scope>VARIANT [LARGE SCALE ANALYSIS] VAL-163</scope>
    <scope>IDENTIFICATION BY MASS SPECTROMETRY [LARGE SCALE ANALYSIS]</scope>
    <source>
        <tissue>Leukemic T-cell</tissue>
    </source>
</reference>
<reference key="10">
    <citation type="journal article" date="2009" name="Science">
        <title>Lysine acetylation targets protein complexes and co-regulates major cellular functions.</title>
        <authorList>
            <person name="Choudhary C."/>
            <person name="Kumar C."/>
            <person name="Gnad F."/>
            <person name="Nielsen M.L."/>
            <person name="Rehman M."/>
            <person name="Walther T.C."/>
            <person name="Olsen J.V."/>
            <person name="Mann M."/>
        </authorList>
    </citation>
    <scope>ACETYLATION [LARGE SCALE ANALYSIS] AT LYS-122</scope>
    <scope>IDENTIFICATION BY MASS SPECTROMETRY [LARGE SCALE ANALYSIS]</scope>
</reference>
<reference key="11">
    <citation type="journal article" date="2010" name="Oncogene">
        <title>The ubiquitin-specific protease USP47 is a novel beta-TRCP interactor regulating cell survival.</title>
        <authorList>
            <person name="Peschiaroli A."/>
            <person name="Skaar J.R."/>
            <person name="Pagano M."/>
            <person name="Melino G."/>
        </authorList>
    </citation>
    <scope>FUNCTION</scope>
    <scope>INTERACTION WITH BTRC AND FBXW11</scope>
</reference>
<reference key="12">
    <citation type="journal article" date="2010" name="Sci. Signal.">
        <title>Quantitative phosphoproteomics reveals widespread full phosphorylation site occupancy during mitosis.</title>
        <authorList>
            <person name="Olsen J.V."/>
            <person name="Vermeulen M."/>
            <person name="Santamaria A."/>
            <person name="Kumar C."/>
            <person name="Miller M.L."/>
            <person name="Jensen L.J."/>
            <person name="Gnad F."/>
            <person name="Cox J."/>
            <person name="Jensen T.S."/>
            <person name="Nigg E.A."/>
            <person name="Brunak S."/>
            <person name="Mann M."/>
        </authorList>
    </citation>
    <scope>PHOSPHORYLATION [LARGE SCALE ANALYSIS] AT SER-832 AND SER-910</scope>
    <scope>IDENTIFICATION BY MASS SPECTROMETRY [LARGE SCALE ANALYSIS]</scope>
    <source>
        <tissue>Cervix carcinoma</tissue>
    </source>
</reference>
<reference key="13">
    <citation type="journal article" date="2011" name="BMC Syst. Biol.">
        <title>Initial characterization of the human central proteome.</title>
        <authorList>
            <person name="Burkard T.R."/>
            <person name="Planyavsky M."/>
            <person name="Kaupe I."/>
            <person name="Breitwieser F.P."/>
            <person name="Buerckstuemmer T."/>
            <person name="Bennett K.L."/>
            <person name="Superti-Furga G."/>
            <person name="Colinge J."/>
        </authorList>
    </citation>
    <scope>IDENTIFICATION BY MASS SPECTROMETRY [LARGE SCALE ANALYSIS]</scope>
</reference>
<reference key="14">
    <citation type="journal article" date="2011" name="Mol. Cell">
        <title>USP47 is a deubiquitylating enzyme that regulates base excision repair by controlling steady-state levels of DNA Polymerase beta.</title>
        <authorList>
            <person name="Parsons J.L."/>
            <person name="Dianova I.I."/>
            <person name="Khoronenkova S.V."/>
            <person name="Edelmann M.J."/>
            <person name="Kessler B.M."/>
            <person name="Dianov G.L."/>
        </authorList>
    </citation>
    <scope>FUNCTION</scope>
    <scope>CATALYTIC ACTIVITY</scope>
    <scope>SUBCELLULAR LOCATION</scope>
    <scope>INTERACTION WITH POLB</scope>
</reference>
<reference key="15">
    <citation type="journal article" date="2013" name="J. Proteome Res.">
        <title>Toward a comprehensive characterization of a human cancer cell phosphoproteome.</title>
        <authorList>
            <person name="Zhou H."/>
            <person name="Di Palma S."/>
            <person name="Preisinger C."/>
            <person name="Peng M."/>
            <person name="Polat A.N."/>
            <person name="Heck A.J."/>
            <person name="Mohammed S."/>
        </authorList>
    </citation>
    <scope>PHOSPHORYLATION [LARGE SCALE ANALYSIS] AT SER-832; SER-910 AND SER-933</scope>
    <scope>IDENTIFICATION BY MASS SPECTROMETRY [LARGE SCALE ANALYSIS]</scope>
    <source>
        <tissue>Cervix carcinoma</tissue>
        <tissue>Erythroleukemia</tissue>
    </source>
</reference>
<reference key="16">
    <citation type="journal article" date="2014" name="J. Proteomics">
        <title>An enzyme assisted RP-RPLC approach for in-depth analysis of human liver phosphoproteome.</title>
        <authorList>
            <person name="Bian Y."/>
            <person name="Song C."/>
            <person name="Cheng K."/>
            <person name="Dong M."/>
            <person name="Wang F."/>
            <person name="Huang J."/>
            <person name="Sun D."/>
            <person name="Wang L."/>
            <person name="Ye M."/>
            <person name="Zou H."/>
        </authorList>
    </citation>
    <scope>PHOSPHORYLATION [LARGE SCALE ANALYSIS] AT SER-1013; THR-1015 AND SER-1017</scope>
    <scope>IDENTIFICATION BY MASS SPECTROMETRY [LARGE SCALE ANALYSIS]</scope>
    <source>
        <tissue>Liver</tissue>
    </source>
</reference>
<sequence length="1375" mass="157311">MVPGEENQLVPKEDVFWRCRQNIFDEMKKKFLQIENAAEEPRVLCIIQDTTNSKTVNERITLNLPASTPVRKLFEDVANKVGYINGTFDLVWGNGINTADMAPLDHTSDKSLLDANFEPGKKNFLHLTDKDGEQPQILLEDSSAGEDSVHDRFIGPLPREGSGGSTSDYVSQSYSYSSILNKSETGYVGLVNQAMTCYLNSLLQTLFMTPEFRNALYKWEFEESEEDPVTSIPYQLQRLFVLLQTSKKRAIETTDVTRSFGWDSSEAWQQHDVQELCRVMFDALEQKWKQTEQADLINELYQGKLKDYVRCLECGYEGWRIDTYLDIPLVIRPYGSSQAFASVEEALHAFIQPEILDGPNQYFCERCKKKCDARKGLRFLHFPYLLTLQLKRFDFDYTTMHRIKLNDRMTFPEELDMSTFIDVEDEKSPQTESCTDSGAENEGSCHSDQMSNDFSNDDGVDEGICLETNSGTEKISKSGLEKNSLIYELFSVMVHSGSAAGGHYYACIKSFSDEQWYSFNDQHVSRITQEDIKKTHGGSSGSRGYYSSAFASSTNAYMLIYRLKDPARNAKFLEVDEYPEHIKNLVQKERELEEQEKRQREIERNTCKIKLFCLHPTKQVMMENKLEVHKDKTLKEAVEMAYKMMDLEEVIPLDCCRLVKYDEFHDYLERSYEGEEDTPMGLLLGGVKSTYMFDLLLETRKPDQVFQSYKPGEVMVKVHVVDLKAESVAAPITVRAYLNQTVTEFKQLISKAIHLPAETMRIVLERCYNDLRLLSVSSKTLKAEGFFRSNKVFVESSETLDYQMAFADSHLWKLLDRHANTIRLFVLLPEQSPVSYSKRTAYQKAGGDSGNVDDDCERVKGPVGSLKSVEAILEESTEKLKSLSLQQQQDGDNGDSSKSTETSDFENIESPLNERDSSASVDNRELEQHIQTSDPENFQSEERSDSDVNNDRSTSSVDSDILSSSHSSDTLCNADNAQIPLANGLDSHSITSSRRTKANEGKKETWDTAEEDSGTDSEYDESGKSRGEMQYMYFKAEPYAADEGSGEGHKWLMVHVDKRITLAAFKQHLEPFVGVLSSHFKVFRVYASNQEFESVRLNETLSSFSDDNKITIRLGRALKKGEYRVKVYQLLVNEQEPCKFLLDAVFAKGMTVRQSKEELIPQLREQCGLELSIDRFRLRKKTWKNPGTVFLDYHIYEEDINISSNWEVFLEVLDGVEKMKSMSQLAVLSRRWKPSEMKLDPFQEVVLESSSVDELREKLSEISGIPLDDIEFAKGRGTFPCDISVLDIHQDLDWNPKVSTLNVWPLYICDDGAVIFYRDKTEELMELTDEQRNELMKKESSRLQKTGHRVTYSPRKEKALKIYLDGAPNKDLTQD</sequence>
<protein>
    <recommendedName>
        <fullName>Ubiquitin carboxyl-terminal hydrolase 47</fullName>
        <ecNumber>3.4.19.12</ecNumber>
    </recommendedName>
    <alternativeName>
        <fullName>Deubiquitinating enzyme 47</fullName>
    </alternativeName>
    <alternativeName>
        <fullName>Ubiquitin thioesterase 47</fullName>
    </alternativeName>
    <alternativeName>
        <fullName>Ubiquitin-specific-processing protease 47</fullName>
    </alternativeName>
</protein>
<comment type="function">
    <text evidence="7 8">Ubiquitin-specific protease that specifically deubiquitinates monoubiquitinated DNA polymerase beta (POLB), stabilizing POLB thereby playing a role in base-excision repair (BER). Acts as a regulator of cell growth and genome integrity. May also indirectly regulate CDC25A expression at a transcriptional level.</text>
</comment>
<comment type="catalytic activity">
    <reaction evidence="8">
        <text>Thiol-dependent hydrolysis of ester, thioester, amide, peptide and isopeptide bonds formed by the C-terminal Gly of ubiquitin (a 76-residue protein attached to proteins as an intracellular targeting signal).</text>
        <dbReference type="EC" id="3.4.19.12"/>
    </reaction>
</comment>
<comment type="subunit">
    <text evidence="7 8">Interacts with BTRC and FBXW11. Interacts with POLB.</text>
</comment>
<comment type="interaction">
    <interactant intactId="EBI-2514143">
        <id>Q96K76</id>
    </interactant>
    <interactant intactId="EBI-3914106">
        <id>O00189</id>
        <label>AP4M1</label>
    </interactant>
    <organismsDiffer>false</organismsDiffer>
    <experiments>3</experiments>
</comment>
<comment type="interaction">
    <interactant intactId="EBI-2514143">
        <id>Q96K76</id>
    </interactant>
    <interactant intactId="EBI-9658477">
        <id>Q86XE5</id>
        <label>HOGA1</label>
    </interactant>
    <organismsDiffer>false</organismsDiffer>
    <experiments>3</experiments>
</comment>
<comment type="interaction">
    <interactant intactId="EBI-2514143">
        <id>Q96K76</id>
    </interactant>
    <interactant intactId="EBI-1111436">
        <id>P52198</id>
        <label>RND2</label>
    </interactant>
    <organismsDiffer>false</organismsDiffer>
    <experiments>3</experiments>
</comment>
<comment type="interaction">
    <interactant intactId="EBI-12313025">
        <id>Q96K76-3</id>
    </interactant>
    <interactant intactId="EBI-3914106">
        <id>O00189</id>
        <label>AP4M1</label>
    </interactant>
    <organismsDiffer>false</organismsDiffer>
    <experiments>3</experiments>
</comment>
<comment type="subcellular location">
    <subcellularLocation>
        <location evidence="8">Cytoplasm</location>
    </subcellularLocation>
</comment>
<comment type="alternative products">
    <event type="alternative splicing"/>
    <isoform>
        <id>Q96K76-1</id>
        <name>1</name>
        <sequence type="displayed"/>
    </isoform>
    <isoform>
        <id>Q96K76-2</id>
        <name>2</name>
        <sequence type="described" ref="VSP_014415"/>
    </isoform>
    <isoform>
        <id>Q96K76-3</id>
        <name>3</name>
        <sequence type="described" ref="VSP_014414"/>
    </isoform>
    <isoform>
        <id>Q96K76-4</id>
        <name>4</name>
        <sequence type="described" ref="VSP_055650"/>
    </isoform>
</comment>
<comment type="tissue specificity">
    <text evidence="5">Expressed in skeletal muscle, heart and testis.</text>
</comment>
<comment type="similarity">
    <text evidence="11">Belongs to the peptidase C19 family.</text>
</comment>
<comment type="caution">
    <text evidence="12 13">Was initially thought to catalytically inactive (PubMed:14715245). However, it was later shown that it is active (PubMed:21362556).</text>
</comment>
<comment type="sequence caution" evidence="11">
    <conflict type="erroneous initiation">
        <sequence resource="EMBL-CDS" id="BAA91348"/>
    </conflict>
    <text>Truncated N-terminus.</text>
</comment>
<comment type="sequence caution" evidence="11">
    <conflict type="frameshift">
        <sequence resource="EMBL" id="BC071559"/>
    </conflict>
</comment>
<keyword id="KW-0007">Acetylation</keyword>
<keyword id="KW-0025">Alternative splicing</keyword>
<keyword id="KW-0963">Cytoplasm</keyword>
<keyword id="KW-0227">DNA damage</keyword>
<keyword id="KW-0234">DNA repair</keyword>
<keyword id="KW-0378">Hydrolase</keyword>
<keyword id="KW-0597">Phosphoprotein</keyword>
<keyword id="KW-0645">Protease</keyword>
<keyword id="KW-1267">Proteomics identification</keyword>
<keyword id="KW-1185">Reference proteome</keyword>
<keyword id="KW-0788">Thiol protease</keyword>
<keyword id="KW-0833">Ubl conjugation pathway</keyword>
<name>UBP47_HUMAN</name>
<proteinExistence type="evidence at protein level"/>
<organism>
    <name type="scientific">Homo sapiens</name>
    <name type="common">Human</name>
    <dbReference type="NCBI Taxonomy" id="9606"/>
    <lineage>
        <taxon>Eukaryota</taxon>
        <taxon>Metazoa</taxon>
        <taxon>Chordata</taxon>
        <taxon>Craniata</taxon>
        <taxon>Vertebrata</taxon>
        <taxon>Euteleostomi</taxon>
        <taxon>Mammalia</taxon>
        <taxon>Eutheria</taxon>
        <taxon>Euarchontoglires</taxon>
        <taxon>Primates</taxon>
        <taxon>Haplorrhini</taxon>
        <taxon>Catarrhini</taxon>
        <taxon>Hominidae</taxon>
        <taxon>Homo</taxon>
    </lineage>
</organism>
<evidence type="ECO:0000255" key="1">
    <source>
        <dbReference type="PROSITE-ProRule" id="PRU10092"/>
    </source>
</evidence>
<evidence type="ECO:0000255" key="2">
    <source>
        <dbReference type="PROSITE-ProRule" id="PRU10093"/>
    </source>
</evidence>
<evidence type="ECO:0000256" key="3">
    <source>
        <dbReference type="SAM" id="MobiDB-lite"/>
    </source>
</evidence>
<evidence type="ECO:0000269" key="4">
    <source>
    </source>
</evidence>
<evidence type="ECO:0000269" key="5">
    <source>
    </source>
</evidence>
<evidence type="ECO:0000269" key="6">
    <source>
    </source>
</evidence>
<evidence type="ECO:0000269" key="7">
    <source>
    </source>
</evidence>
<evidence type="ECO:0000269" key="8">
    <source>
    </source>
</evidence>
<evidence type="ECO:0000303" key="9">
    <source>
    </source>
</evidence>
<evidence type="ECO:0000303" key="10">
    <source>
    </source>
</evidence>
<evidence type="ECO:0000305" key="11"/>
<evidence type="ECO:0000305" key="12">
    <source>
    </source>
</evidence>
<evidence type="ECO:0000305" key="13">
    <source>
    </source>
</evidence>
<evidence type="ECO:0007744" key="14">
    <source>
    </source>
</evidence>
<evidence type="ECO:0007744" key="15">
    <source>
    </source>
</evidence>
<evidence type="ECO:0007744" key="16">
    <source>
    </source>
</evidence>
<evidence type="ECO:0007744" key="17">
    <source>
    </source>
</evidence>
<evidence type="ECO:0007744" key="18">
    <source>
    </source>
</evidence>
<evidence type="ECO:0007744" key="19">
    <source>
    </source>
</evidence>
<evidence type="ECO:0007744" key="20">
    <source>
    </source>
</evidence>
<gene>
    <name type="primary">USP47</name>
</gene>
<feature type="chain" id="PRO_0000080676" description="Ubiquitin carboxyl-terminal hydrolase 47">
    <location>
        <begin position="1"/>
        <end position="1375"/>
    </location>
</feature>
<feature type="domain" description="USP">
    <location>
        <begin position="188"/>
        <end position="564"/>
    </location>
</feature>
<feature type="region of interest" description="Disordered" evidence="3">
    <location>
        <begin position="425"/>
        <end position="452"/>
    </location>
</feature>
<feature type="region of interest" description="Disordered" evidence="3">
    <location>
        <begin position="840"/>
        <end position="859"/>
    </location>
</feature>
<feature type="region of interest" description="Disordered" evidence="3">
    <location>
        <begin position="880"/>
        <end position="968"/>
    </location>
</feature>
<feature type="region of interest" description="Disordered" evidence="3">
    <location>
        <begin position="983"/>
        <end position="1024"/>
    </location>
</feature>
<feature type="compositionally biased region" description="Polar residues" evidence="3">
    <location>
        <begin position="430"/>
        <end position="452"/>
    </location>
</feature>
<feature type="compositionally biased region" description="Low complexity" evidence="3">
    <location>
        <begin position="882"/>
        <end position="899"/>
    </location>
</feature>
<feature type="compositionally biased region" description="Basic and acidic residues" evidence="3">
    <location>
        <begin position="912"/>
        <end position="928"/>
    </location>
</feature>
<feature type="compositionally biased region" description="Polar residues" evidence="3">
    <location>
        <begin position="929"/>
        <end position="938"/>
    </location>
</feature>
<feature type="compositionally biased region" description="Basic and acidic residues" evidence="3">
    <location>
        <begin position="940"/>
        <end position="950"/>
    </location>
</feature>
<feature type="compositionally biased region" description="Low complexity" evidence="3">
    <location>
        <begin position="953"/>
        <end position="968"/>
    </location>
</feature>
<feature type="compositionally biased region" description="Basic and acidic residues" evidence="3">
    <location>
        <begin position="997"/>
        <end position="1006"/>
    </location>
</feature>
<feature type="compositionally biased region" description="Acidic residues" evidence="3">
    <location>
        <begin position="1007"/>
        <end position="1020"/>
    </location>
</feature>
<feature type="active site" description="Nucleophile" evidence="1 2">
    <location>
        <position position="197"/>
    </location>
</feature>
<feature type="active site" description="Proton acceptor" evidence="1 2">
    <location>
        <position position="503"/>
    </location>
</feature>
<feature type="modified residue" description="N6-acetyllysine" evidence="16">
    <location>
        <position position="122"/>
    </location>
</feature>
<feature type="modified residue" description="Phosphoserine" evidence="14 15 18 19">
    <location>
        <position position="832"/>
    </location>
</feature>
<feature type="modified residue" description="Phosphoserine" evidence="15 17 18 19">
    <location>
        <position position="910"/>
    </location>
</feature>
<feature type="modified residue" description="Phosphoserine" evidence="19">
    <location>
        <position position="933"/>
    </location>
</feature>
<feature type="modified residue" description="Phosphoserine" evidence="20">
    <location>
        <position position="1013"/>
    </location>
</feature>
<feature type="modified residue" description="Phosphothreonine" evidence="20">
    <location>
        <position position="1015"/>
    </location>
</feature>
<feature type="modified residue" description="Phosphoserine" evidence="20">
    <location>
        <position position="1017"/>
    </location>
</feature>
<feature type="splice variant" id="VSP_014414" description="In isoform 3." evidence="10">
    <location>
        <begin position="1"/>
        <end position="1218"/>
    </location>
</feature>
<feature type="splice variant" id="VSP_014415" description="In isoform 2." evidence="9">
    <location>
        <begin position="14"/>
        <end position="101"/>
    </location>
</feature>
<feature type="splice variant" id="VSP_055650" description="In isoform 4." evidence="10">
    <location>
        <begin position="14"/>
        <end position="33"/>
    </location>
</feature>
<feature type="sequence variant" id="VAR_022787" description="In dbSNP:rs11022079." evidence="4 6 15 17">
    <original>G</original>
    <variation>V</variation>
    <location>
        <position position="163"/>
    </location>
</feature>
<feature type="sequence conflict" description="In Ref. 1; BAG54467." evidence="11" ref="1">
    <original>F</original>
    <variation>L</variation>
    <location>
        <position position="340"/>
    </location>
</feature>
<feature type="sequence conflict" description="In Ref. 1; BAB55063/BAG54467 and 3; BC071559." evidence="11" ref="1 3">
    <original>V</original>
    <variation>A</variation>
    <location>
        <position position="494"/>
    </location>
</feature>
<feature type="sequence conflict" description="In Ref. 1; BAB55063." evidence="11" ref="1">
    <original>N</original>
    <variation>D</variation>
    <location>
        <position position="520"/>
    </location>
</feature>
<feature type="sequence conflict" description="In Ref. 1; BAB55063." evidence="11" ref="1">
    <original>D</original>
    <variation>G</variation>
    <location>
        <position position="576"/>
    </location>
</feature>
<feature type="sequence conflict" description="In Ref. 4; BAB84902." evidence="11" ref="4">
    <original>R</original>
    <variation>G</variation>
    <location>
        <position position="604"/>
    </location>
</feature>
<feature type="sequence conflict" description="In Ref. 1; BAG54467." evidence="11" ref="1">
    <original>P</original>
    <variation>S</variation>
    <location>
        <position position="911"/>
    </location>
</feature>
<feature type="sequence conflict" description="In Ref. 1; BAA91348." evidence="11" ref="1">
    <original>E</original>
    <variation>G</variation>
    <location>
        <position position="1157"/>
    </location>
</feature>
<feature type="sequence conflict" description="In Ref. 1; BAA91348." evidence="11" ref="1">
    <original>A</original>
    <variation>G</variation>
    <location>
        <position position="1313"/>
    </location>
</feature>
<feature type="sequence conflict" description="In Ref. 3; BC071559." evidence="11" ref="3">
    <original>P</original>
    <variation>Q</variation>
    <location>
        <position position="1368"/>
    </location>
</feature>
<dbReference type="EC" id="3.4.19.12"/>
<dbReference type="EMBL" id="AK000734">
    <property type="protein sequence ID" value="BAA91348.1"/>
    <property type="status" value="ALT_INIT"/>
    <property type="molecule type" value="mRNA"/>
</dbReference>
<dbReference type="EMBL" id="AK027362">
    <property type="protein sequence ID" value="BAB55063.1"/>
    <property type="molecule type" value="mRNA"/>
</dbReference>
<dbReference type="EMBL" id="AK092290">
    <property type="status" value="NOT_ANNOTATED_CDS"/>
    <property type="molecule type" value="mRNA"/>
</dbReference>
<dbReference type="EMBL" id="AK127264">
    <property type="protein sequence ID" value="BAG54467.1"/>
    <property type="molecule type" value="mRNA"/>
</dbReference>
<dbReference type="EMBL" id="AC104383">
    <property type="status" value="NOT_ANNOTATED_CDS"/>
    <property type="molecule type" value="Genomic_DNA"/>
</dbReference>
<dbReference type="EMBL" id="AC124276">
    <property type="status" value="NOT_ANNOTATED_CDS"/>
    <property type="molecule type" value="Genomic_DNA"/>
</dbReference>
<dbReference type="EMBL" id="BC000226">
    <property type="protein sequence ID" value="AAH00226.2"/>
    <property type="molecule type" value="mRNA"/>
</dbReference>
<dbReference type="EMBL" id="BC047044">
    <property type="protein sequence ID" value="AAH47044.2"/>
    <property type="molecule type" value="mRNA"/>
</dbReference>
<dbReference type="EMBL" id="BC071559">
    <property type="status" value="NOT_ANNOTATED_CDS"/>
    <property type="molecule type" value="mRNA"/>
</dbReference>
<dbReference type="EMBL" id="AK074076">
    <property type="protein sequence ID" value="BAB84902.1"/>
    <property type="molecule type" value="mRNA"/>
</dbReference>
<dbReference type="EMBL" id="AL832991">
    <property type="protein sequence ID" value="CAH56337.1"/>
    <property type="molecule type" value="mRNA"/>
</dbReference>
<dbReference type="CCDS" id="CCDS41619.1">
    <molecule id="Q96K76-2"/>
</dbReference>
<dbReference type="CCDS" id="CCDS60725.1">
    <molecule id="Q96K76-4"/>
</dbReference>
<dbReference type="CCDS" id="CCDS81554.1">
    <molecule id="Q96K76-1"/>
</dbReference>
<dbReference type="RefSeq" id="NP_001269588.1">
    <molecule id="Q96K76-4"/>
    <property type="nucleotide sequence ID" value="NM_001282659.2"/>
</dbReference>
<dbReference type="RefSeq" id="NP_001317137.1">
    <molecule id="Q96K76-1"/>
    <property type="nucleotide sequence ID" value="NM_001330208.2"/>
</dbReference>
<dbReference type="RefSeq" id="NP_060414.3">
    <molecule id="Q96K76-2"/>
    <property type="nucleotide sequence ID" value="NM_017944.3"/>
</dbReference>
<dbReference type="SMR" id="Q96K76"/>
<dbReference type="BioGRID" id="120360">
    <property type="interactions" value="193"/>
</dbReference>
<dbReference type="DIP" id="DIP-53629N"/>
<dbReference type="FunCoup" id="Q96K76">
    <property type="interactions" value="4001"/>
</dbReference>
<dbReference type="IntAct" id="Q96K76">
    <property type="interactions" value="101"/>
</dbReference>
<dbReference type="MINT" id="Q96K76"/>
<dbReference type="STRING" id="9606.ENSP00000382382"/>
<dbReference type="BindingDB" id="Q96K76"/>
<dbReference type="ChEMBL" id="CHEMBL2157851"/>
<dbReference type="MEROPS" id="C19.055"/>
<dbReference type="CarbonylDB" id="Q96K76"/>
<dbReference type="GlyCosmos" id="Q96K76">
    <property type="glycosylation" value="2 sites, 1 glycan"/>
</dbReference>
<dbReference type="GlyGen" id="Q96K76">
    <property type="glycosylation" value="2 sites, 1 O-linked glycan (2 sites)"/>
</dbReference>
<dbReference type="iPTMnet" id="Q96K76"/>
<dbReference type="MetOSite" id="Q96K76"/>
<dbReference type="PhosphoSitePlus" id="Q96K76"/>
<dbReference type="BioMuta" id="USP47"/>
<dbReference type="DMDM" id="313104266"/>
<dbReference type="jPOST" id="Q96K76"/>
<dbReference type="MassIVE" id="Q96K76"/>
<dbReference type="PaxDb" id="9606-ENSP00000433146"/>
<dbReference type="PeptideAtlas" id="Q96K76"/>
<dbReference type="ProteomicsDB" id="21996"/>
<dbReference type="ProteomicsDB" id="77047">
    <molecule id="Q96K76-1"/>
</dbReference>
<dbReference type="ProteomicsDB" id="77048">
    <molecule id="Q96K76-2"/>
</dbReference>
<dbReference type="ProteomicsDB" id="77049">
    <molecule id="Q96K76-3"/>
</dbReference>
<dbReference type="Pumba" id="Q96K76"/>
<dbReference type="Antibodypedia" id="24483">
    <property type="antibodies" value="155 antibodies from 26 providers"/>
</dbReference>
<dbReference type="DNASU" id="55031"/>
<dbReference type="Ensembl" id="ENST00000339865.9">
    <molecule id="Q96K76-2"/>
    <property type="protein sequence ID" value="ENSP00000339957.5"/>
    <property type="gene ID" value="ENSG00000170242.19"/>
</dbReference>
<dbReference type="Ensembl" id="ENST00000399455.2">
    <molecule id="Q96K76-1"/>
    <property type="protein sequence ID" value="ENSP00000382382.2"/>
    <property type="gene ID" value="ENSG00000170242.19"/>
</dbReference>
<dbReference type="Ensembl" id="ENST00000527733.7">
    <molecule id="Q96K76-4"/>
    <property type="protein sequence ID" value="ENSP00000433146.2"/>
    <property type="gene ID" value="ENSG00000170242.19"/>
</dbReference>
<dbReference type="GeneID" id="55031"/>
<dbReference type="KEGG" id="hsa:55031"/>
<dbReference type="MANE-Select" id="ENST00000527733.7">
    <molecule id="Q96K76-4"/>
    <property type="protein sequence ID" value="ENSP00000433146.2"/>
    <property type="RefSeq nucleotide sequence ID" value="NM_001282659.2"/>
    <property type="RefSeq protein sequence ID" value="NP_001269588.1"/>
</dbReference>
<dbReference type="UCSC" id="uc001mjr.4">
    <molecule id="Q96K76-1"/>
    <property type="organism name" value="human"/>
</dbReference>
<dbReference type="AGR" id="HGNC:20076"/>
<dbReference type="CTD" id="55031"/>
<dbReference type="DisGeNET" id="55031"/>
<dbReference type="GeneCards" id="USP47"/>
<dbReference type="HGNC" id="HGNC:20076">
    <property type="gene designation" value="USP47"/>
</dbReference>
<dbReference type="HPA" id="ENSG00000170242">
    <property type="expression patterns" value="Low tissue specificity"/>
</dbReference>
<dbReference type="MIM" id="614460">
    <property type="type" value="gene"/>
</dbReference>
<dbReference type="neXtProt" id="NX_Q96K76"/>
<dbReference type="OpenTargets" id="ENSG00000170242"/>
<dbReference type="PharmGKB" id="PA134880952"/>
<dbReference type="VEuPathDB" id="HostDB:ENSG00000170242"/>
<dbReference type="eggNOG" id="KOG4598">
    <property type="taxonomic scope" value="Eukaryota"/>
</dbReference>
<dbReference type="GeneTree" id="ENSGT00940000157223"/>
<dbReference type="HOGENOM" id="CLU_002928_0_0_1"/>
<dbReference type="InParanoid" id="Q96K76"/>
<dbReference type="OMA" id="CEWIVSK"/>
<dbReference type="OrthoDB" id="289038at2759"/>
<dbReference type="PAN-GO" id="Q96K76">
    <property type="GO annotations" value="6 GO annotations based on evolutionary models"/>
</dbReference>
<dbReference type="PhylomeDB" id="Q96K76"/>
<dbReference type="TreeFam" id="TF314142"/>
<dbReference type="PathwayCommons" id="Q96K76"/>
<dbReference type="Reactome" id="R-HSA-5689880">
    <property type="pathway name" value="Ub-specific processing proteases"/>
</dbReference>
<dbReference type="SignaLink" id="Q96K76"/>
<dbReference type="BioGRID-ORCS" id="55031">
    <property type="hits" value="16 hits in 1201 CRISPR screens"/>
</dbReference>
<dbReference type="ChiTaRS" id="USP47">
    <property type="organism name" value="human"/>
</dbReference>
<dbReference type="GeneWiki" id="USP47"/>
<dbReference type="GenomeRNAi" id="55031"/>
<dbReference type="Pharos" id="Q96K76">
    <property type="development level" value="Tchem"/>
</dbReference>
<dbReference type="PRO" id="PR:Q96K76"/>
<dbReference type="Proteomes" id="UP000005640">
    <property type="component" value="Chromosome 11"/>
</dbReference>
<dbReference type="RNAct" id="Q96K76">
    <property type="molecule type" value="protein"/>
</dbReference>
<dbReference type="Bgee" id="ENSG00000170242">
    <property type="expression patterns" value="Expressed in tendon of biceps brachii and 212 other cell types or tissues"/>
</dbReference>
<dbReference type="GO" id="GO:0005737">
    <property type="term" value="C:cytoplasm"/>
    <property type="evidence" value="ECO:0000314"/>
    <property type="project" value="UniProtKB"/>
</dbReference>
<dbReference type="GO" id="GO:0005829">
    <property type="term" value="C:cytosol"/>
    <property type="evidence" value="ECO:0000318"/>
    <property type="project" value="GO_Central"/>
</dbReference>
<dbReference type="GO" id="GO:0005654">
    <property type="term" value="C:nucleoplasm"/>
    <property type="evidence" value="ECO:0000304"/>
    <property type="project" value="Reactome"/>
</dbReference>
<dbReference type="GO" id="GO:0005634">
    <property type="term" value="C:nucleus"/>
    <property type="evidence" value="ECO:0000314"/>
    <property type="project" value="FlyBase"/>
</dbReference>
<dbReference type="GO" id="GO:0019005">
    <property type="term" value="C:SCF ubiquitin ligase complex"/>
    <property type="evidence" value="ECO:0000314"/>
    <property type="project" value="UniProtKB"/>
</dbReference>
<dbReference type="GO" id="GO:0004843">
    <property type="term" value="F:cysteine-type deubiquitinase activity"/>
    <property type="evidence" value="ECO:0000314"/>
    <property type="project" value="UniProtKB"/>
</dbReference>
<dbReference type="GO" id="GO:0101005">
    <property type="term" value="F:deubiquitinase activity"/>
    <property type="evidence" value="ECO:0000314"/>
    <property type="project" value="FlyBase"/>
</dbReference>
<dbReference type="GO" id="GO:0071987">
    <property type="term" value="F:WD40-repeat domain binding"/>
    <property type="evidence" value="ECO:0000353"/>
    <property type="project" value="UniProtKB"/>
</dbReference>
<dbReference type="GO" id="GO:0006284">
    <property type="term" value="P:base-excision repair"/>
    <property type="evidence" value="ECO:0000315"/>
    <property type="project" value="UniProtKB"/>
</dbReference>
<dbReference type="GO" id="GO:0006974">
    <property type="term" value="P:DNA damage response"/>
    <property type="evidence" value="ECO:0000315"/>
    <property type="project" value="UniProtKB"/>
</dbReference>
<dbReference type="GO" id="GO:0008630">
    <property type="term" value="P:intrinsic apoptotic signaling pathway in response to DNA damage"/>
    <property type="evidence" value="ECO:0007669"/>
    <property type="project" value="Ensembl"/>
</dbReference>
<dbReference type="GO" id="GO:0035520">
    <property type="term" value="P:monoubiquitinated protein deubiquitination"/>
    <property type="evidence" value="ECO:0000314"/>
    <property type="project" value="UniProtKB"/>
</dbReference>
<dbReference type="GO" id="GO:1902230">
    <property type="term" value="P:negative regulation of intrinsic apoptotic signaling pathway in response to DNA damage"/>
    <property type="evidence" value="ECO:0007669"/>
    <property type="project" value="Ensembl"/>
</dbReference>
<dbReference type="GO" id="GO:0090263">
    <property type="term" value="P:positive regulation of canonical Wnt signaling pathway"/>
    <property type="evidence" value="ECO:0000315"/>
    <property type="project" value="FlyBase"/>
</dbReference>
<dbReference type="GO" id="GO:0016579">
    <property type="term" value="P:protein deubiquitination"/>
    <property type="evidence" value="ECO:0000304"/>
    <property type="project" value="Reactome"/>
</dbReference>
<dbReference type="GO" id="GO:0006508">
    <property type="term" value="P:proteolysis"/>
    <property type="evidence" value="ECO:0007669"/>
    <property type="project" value="UniProtKB-KW"/>
</dbReference>
<dbReference type="GO" id="GO:0031647">
    <property type="term" value="P:regulation of protein stability"/>
    <property type="evidence" value="ECO:0000318"/>
    <property type="project" value="GO_Central"/>
</dbReference>
<dbReference type="CDD" id="cd02659">
    <property type="entry name" value="peptidase_C19C"/>
    <property type="match status" value="1"/>
</dbReference>
<dbReference type="Gene3D" id="3.90.70.10">
    <property type="entry name" value="Cysteine proteinases"/>
    <property type="match status" value="1"/>
</dbReference>
<dbReference type="InterPro" id="IPR038765">
    <property type="entry name" value="Papain-like_cys_pep_sf"/>
</dbReference>
<dbReference type="InterPro" id="IPR050164">
    <property type="entry name" value="Peptidase_C19"/>
</dbReference>
<dbReference type="InterPro" id="IPR001394">
    <property type="entry name" value="Peptidase_C19_UCH"/>
</dbReference>
<dbReference type="InterPro" id="IPR029071">
    <property type="entry name" value="Ubiquitin-like_domsf"/>
</dbReference>
<dbReference type="InterPro" id="IPR045578">
    <property type="entry name" value="USP47_C"/>
</dbReference>
<dbReference type="InterPro" id="IPR018200">
    <property type="entry name" value="USP_CS"/>
</dbReference>
<dbReference type="InterPro" id="IPR028889">
    <property type="entry name" value="USP_dom"/>
</dbReference>
<dbReference type="PANTHER" id="PTHR24006">
    <property type="entry name" value="UBIQUITIN CARBOXYL-TERMINAL HYDROLASE"/>
    <property type="match status" value="1"/>
</dbReference>
<dbReference type="PANTHER" id="PTHR24006:SF702">
    <property type="entry name" value="UBIQUITIN CARBOXYL-TERMINAL HYDROLASE 47"/>
    <property type="match status" value="1"/>
</dbReference>
<dbReference type="Pfam" id="PF00443">
    <property type="entry name" value="UCH"/>
    <property type="match status" value="1"/>
</dbReference>
<dbReference type="Pfam" id="PF19718">
    <property type="entry name" value="USP47_C"/>
    <property type="match status" value="1"/>
</dbReference>
<dbReference type="SUPFAM" id="SSF54001">
    <property type="entry name" value="Cysteine proteinases"/>
    <property type="match status" value="1"/>
</dbReference>
<dbReference type="SUPFAM" id="SSF54236">
    <property type="entry name" value="Ubiquitin-like"/>
    <property type="match status" value="1"/>
</dbReference>
<dbReference type="PROSITE" id="PS00972">
    <property type="entry name" value="USP_1"/>
    <property type="match status" value="1"/>
</dbReference>
<dbReference type="PROSITE" id="PS00973">
    <property type="entry name" value="USP_2"/>
    <property type="match status" value="1"/>
</dbReference>
<dbReference type="PROSITE" id="PS50235">
    <property type="entry name" value="USP_3"/>
    <property type="match status" value="1"/>
</dbReference>
<accession>Q96K76</accession>
<accession>B3KXF5</accession>
<accession>E9PM46</accession>
<accession>Q658U0</accession>
<accession>Q86Y73</accession>
<accession>Q8TEP6</accession>
<accession>Q9BWI0</accession>
<accession>Q9NWN1</accession>